<protein>
    <recommendedName>
        <fullName evidence="1">Glutamine--tRNA ligase</fullName>
        <ecNumber evidence="1">6.1.1.18</ecNumber>
    </recommendedName>
    <alternativeName>
        <fullName evidence="1">Glutaminyl-tRNA synthetase</fullName>
        <shortName evidence="1">GlnRS</shortName>
    </alternativeName>
</protein>
<feature type="chain" id="PRO_1000095482" description="Glutamine--tRNA ligase">
    <location>
        <begin position="1"/>
        <end position="554"/>
    </location>
</feature>
<feature type="short sequence motif" description="'HIGH' region" evidence="1">
    <location>
        <begin position="33"/>
        <end position="43"/>
    </location>
</feature>
<feature type="short sequence motif" description="'KMSKS' region" evidence="1">
    <location>
        <begin position="266"/>
        <end position="270"/>
    </location>
</feature>
<feature type="binding site" evidence="1">
    <location>
        <begin position="34"/>
        <end position="36"/>
    </location>
    <ligand>
        <name>ATP</name>
        <dbReference type="ChEBI" id="CHEBI:30616"/>
    </ligand>
</feature>
<feature type="binding site" evidence="1">
    <location>
        <begin position="40"/>
        <end position="46"/>
    </location>
    <ligand>
        <name>ATP</name>
        <dbReference type="ChEBI" id="CHEBI:30616"/>
    </ligand>
</feature>
<feature type="binding site" evidence="1">
    <location>
        <position position="66"/>
    </location>
    <ligand>
        <name>L-glutamine</name>
        <dbReference type="ChEBI" id="CHEBI:58359"/>
    </ligand>
</feature>
<feature type="binding site" evidence="1">
    <location>
        <position position="210"/>
    </location>
    <ligand>
        <name>L-glutamine</name>
        <dbReference type="ChEBI" id="CHEBI:58359"/>
    </ligand>
</feature>
<feature type="binding site" evidence="1">
    <location>
        <position position="229"/>
    </location>
    <ligand>
        <name>ATP</name>
        <dbReference type="ChEBI" id="CHEBI:30616"/>
    </ligand>
</feature>
<feature type="binding site" evidence="1">
    <location>
        <begin position="259"/>
        <end position="260"/>
    </location>
    <ligand>
        <name>ATP</name>
        <dbReference type="ChEBI" id="CHEBI:30616"/>
    </ligand>
</feature>
<feature type="binding site" evidence="1">
    <location>
        <begin position="267"/>
        <end position="269"/>
    </location>
    <ligand>
        <name>ATP</name>
        <dbReference type="ChEBI" id="CHEBI:30616"/>
    </ligand>
</feature>
<proteinExistence type="inferred from homology"/>
<evidence type="ECO:0000255" key="1">
    <source>
        <dbReference type="HAMAP-Rule" id="MF_00126"/>
    </source>
</evidence>
<name>SYQ_CLOD6</name>
<organism>
    <name type="scientific">Clostridioides difficile (strain 630)</name>
    <name type="common">Peptoclostridium difficile</name>
    <dbReference type="NCBI Taxonomy" id="272563"/>
    <lineage>
        <taxon>Bacteria</taxon>
        <taxon>Bacillati</taxon>
        <taxon>Bacillota</taxon>
        <taxon>Clostridia</taxon>
        <taxon>Peptostreptococcales</taxon>
        <taxon>Peptostreptococcaceae</taxon>
        <taxon>Clostridioides</taxon>
    </lineage>
</organism>
<gene>
    <name evidence="1" type="primary">glnS</name>
    <name type="ordered locus">CD630_20590</name>
</gene>
<comment type="catalytic activity">
    <reaction evidence="1">
        <text>tRNA(Gln) + L-glutamine + ATP = L-glutaminyl-tRNA(Gln) + AMP + diphosphate</text>
        <dbReference type="Rhea" id="RHEA:20121"/>
        <dbReference type="Rhea" id="RHEA-COMP:9662"/>
        <dbReference type="Rhea" id="RHEA-COMP:9681"/>
        <dbReference type="ChEBI" id="CHEBI:30616"/>
        <dbReference type="ChEBI" id="CHEBI:33019"/>
        <dbReference type="ChEBI" id="CHEBI:58359"/>
        <dbReference type="ChEBI" id="CHEBI:78442"/>
        <dbReference type="ChEBI" id="CHEBI:78521"/>
        <dbReference type="ChEBI" id="CHEBI:456215"/>
        <dbReference type="EC" id="6.1.1.18"/>
    </reaction>
</comment>
<comment type="subunit">
    <text evidence="1">Monomer.</text>
</comment>
<comment type="subcellular location">
    <subcellularLocation>
        <location evidence="1">Cytoplasm</location>
    </subcellularLocation>
</comment>
<comment type="similarity">
    <text evidence="1">Belongs to the class-I aminoacyl-tRNA synthetase family.</text>
</comment>
<keyword id="KW-0030">Aminoacyl-tRNA synthetase</keyword>
<keyword id="KW-0067">ATP-binding</keyword>
<keyword id="KW-0963">Cytoplasm</keyword>
<keyword id="KW-0436">Ligase</keyword>
<keyword id="KW-0547">Nucleotide-binding</keyword>
<keyword id="KW-0648">Protein biosynthesis</keyword>
<keyword id="KW-1185">Reference proteome</keyword>
<sequence>MSNETNSSNFIKNIIINDLETGKHDSIITRFPPEPNGYLHIGHAKSICLNFGLAKEFNGKANLRFDDTNPLKEDVEYVESIKEDVKWLGFDWNELNFASNYFDEMYKRALILIKKGKAYVCDLTQEEMREYRGTLTEPGKESPHRNRTIEENLDLFERMKNGEFKDGEKTLRAKIDMSSPNINLRDPIIYRISHSTHHNTGDKWCIYPMYAFAHPIEDAIEGITHSICTLEFEDQRPLYDWFVKECEMENIPRQIEFARLNINNTVMSKRKLKQLVDEGIVDGWDDPRVPTISGIRRKGYTAEALRNFCSEIGVSKVNSTVDSQMLDYFLRENLQPKAPLTMGVLRPLKLIITNYPEDKIEMLEIENNAKDESQGKRLVPFSRELYIEQDDFMEEPVKKYFRFFPGNEVRLKGAYFVKCTDVIKDENGNVVEIHGTYDPETKSGSGFTGRKVKSTIHWVDAKSAIPCEFRLFEPLILDDIPENEGKHFLEQINPNSLEILQGFVEPTQIKDAKPFDKFQFVRNGFFSIDNKYTTDEKFVFNRIVPLKSSFKPGK</sequence>
<accession>Q188C8</accession>
<reference key="1">
    <citation type="journal article" date="2006" name="Nat. Genet.">
        <title>The multidrug-resistant human pathogen Clostridium difficile has a highly mobile, mosaic genome.</title>
        <authorList>
            <person name="Sebaihia M."/>
            <person name="Wren B.W."/>
            <person name="Mullany P."/>
            <person name="Fairweather N.F."/>
            <person name="Minton N."/>
            <person name="Stabler R."/>
            <person name="Thomson N.R."/>
            <person name="Roberts A.P."/>
            <person name="Cerdeno-Tarraga A.M."/>
            <person name="Wang H."/>
            <person name="Holden M.T.G."/>
            <person name="Wright A."/>
            <person name="Churcher C."/>
            <person name="Quail M.A."/>
            <person name="Baker S."/>
            <person name="Bason N."/>
            <person name="Brooks K."/>
            <person name="Chillingworth T."/>
            <person name="Cronin A."/>
            <person name="Davis P."/>
            <person name="Dowd L."/>
            <person name="Fraser A."/>
            <person name="Feltwell T."/>
            <person name="Hance Z."/>
            <person name="Holroyd S."/>
            <person name="Jagels K."/>
            <person name="Moule S."/>
            <person name="Mungall K."/>
            <person name="Price C."/>
            <person name="Rabbinowitsch E."/>
            <person name="Sharp S."/>
            <person name="Simmonds M."/>
            <person name="Stevens K."/>
            <person name="Unwin L."/>
            <person name="Whithead S."/>
            <person name="Dupuy B."/>
            <person name="Dougan G."/>
            <person name="Barrell B."/>
            <person name="Parkhill J."/>
        </authorList>
    </citation>
    <scope>NUCLEOTIDE SEQUENCE [LARGE SCALE GENOMIC DNA]</scope>
    <source>
        <strain>630</strain>
    </source>
</reference>
<dbReference type="EC" id="6.1.1.18" evidence="1"/>
<dbReference type="EMBL" id="AM180355">
    <property type="protein sequence ID" value="CAJ68944.1"/>
    <property type="molecule type" value="Genomic_DNA"/>
</dbReference>
<dbReference type="RefSeq" id="WP_003428989.1">
    <property type="nucleotide sequence ID" value="NZ_JAUPES010000014.1"/>
</dbReference>
<dbReference type="RefSeq" id="YP_001088573.1">
    <property type="nucleotide sequence ID" value="NC_009089.1"/>
</dbReference>
<dbReference type="SMR" id="Q188C8"/>
<dbReference type="STRING" id="272563.CD630_20590"/>
<dbReference type="EnsemblBacteria" id="CAJ68944">
    <property type="protein sequence ID" value="CAJ68944"/>
    <property type="gene ID" value="CD630_20590"/>
</dbReference>
<dbReference type="KEGG" id="cdf:CD630_20590"/>
<dbReference type="KEGG" id="pdc:CDIF630_02282"/>
<dbReference type="PATRIC" id="fig|272563.120.peg.2173"/>
<dbReference type="eggNOG" id="COG0008">
    <property type="taxonomic scope" value="Bacteria"/>
</dbReference>
<dbReference type="OrthoDB" id="9801560at2"/>
<dbReference type="PhylomeDB" id="Q188C8"/>
<dbReference type="BioCyc" id="PDIF272563:G12WB-2210-MONOMER"/>
<dbReference type="Proteomes" id="UP000001978">
    <property type="component" value="Chromosome"/>
</dbReference>
<dbReference type="GO" id="GO:0005829">
    <property type="term" value="C:cytosol"/>
    <property type="evidence" value="ECO:0007669"/>
    <property type="project" value="TreeGrafter"/>
</dbReference>
<dbReference type="GO" id="GO:0005524">
    <property type="term" value="F:ATP binding"/>
    <property type="evidence" value="ECO:0007669"/>
    <property type="project" value="UniProtKB-UniRule"/>
</dbReference>
<dbReference type="GO" id="GO:0004819">
    <property type="term" value="F:glutamine-tRNA ligase activity"/>
    <property type="evidence" value="ECO:0007669"/>
    <property type="project" value="UniProtKB-UniRule"/>
</dbReference>
<dbReference type="GO" id="GO:0006425">
    <property type="term" value="P:glutaminyl-tRNA aminoacylation"/>
    <property type="evidence" value="ECO:0007669"/>
    <property type="project" value="InterPro"/>
</dbReference>
<dbReference type="GO" id="GO:0006424">
    <property type="term" value="P:glutamyl-tRNA aminoacylation"/>
    <property type="evidence" value="ECO:0007669"/>
    <property type="project" value="UniProtKB-UniRule"/>
</dbReference>
<dbReference type="CDD" id="cd00807">
    <property type="entry name" value="GlnRS_core"/>
    <property type="match status" value="1"/>
</dbReference>
<dbReference type="FunFam" id="1.10.1160.10:FF:000001">
    <property type="entry name" value="Glutamine--tRNA ligase"/>
    <property type="match status" value="1"/>
</dbReference>
<dbReference type="FunFam" id="2.40.240.10:FF:000007">
    <property type="entry name" value="Glutamine--tRNA ligase"/>
    <property type="match status" value="1"/>
</dbReference>
<dbReference type="FunFam" id="3.90.800.10:FF:000001">
    <property type="entry name" value="Glutamine--tRNA ligase"/>
    <property type="match status" value="1"/>
</dbReference>
<dbReference type="FunFam" id="3.40.50.620:FF:000037">
    <property type="entry name" value="Glutamine--tRNA ligase cytoplasmic"/>
    <property type="match status" value="1"/>
</dbReference>
<dbReference type="Gene3D" id="1.10.1160.10">
    <property type="entry name" value="Glutamyl-trna Synthetase, Domain 2"/>
    <property type="match status" value="1"/>
</dbReference>
<dbReference type="Gene3D" id="3.90.800.10">
    <property type="entry name" value="Glutamyl-tRNA Synthetase, Domain 3"/>
    <property type="match status" value="1"/>
</dbReference>
<dbReference type="Gene3D" id="3.40.50.620">
    <property type="entry name" value="HUPs"/>
    <property type="match status" value="1"/>
</dbReference>
<dbReference type="Gene3D" id="2.40.240.10">
    <property type="entry name" value="Ribosomal Protein L25, Chain P"/>
    <property type="match status" value="2"/>
</dbReference>
<dbReference type="HAMAP" id="MF_00126">
    <property type="entry name" value="Gln_tRNA_synth"/>
    <property type="match status" value="1"/>
</dbReference>
<dbReference type="InterPro" id="IPR001412">
    <property type="entry name" value="aa-tRNA-synth_I_CS"/>
</dbReference>
<dbReference type="InterPro" id="IPR004514">
    <property type="entry name" value="Gln-tRNA-synth"/>
</dbReference>
<dbReference type="InterPro" id="IPR050132">
    <property type="entry name" value="Gln/Glu-tRNA_Ligase"/>
</dbReference>
<dbReference type="InterPro" id="IPR022861">
    <property type="entry name" value="Gln_tRNA_ligase_bac"/>
</dbReference>
<dbReference type="InterPro" id="IPR000924">
    <property type="entry name" value="Glu/Gln-tRNA-synth"/>
</dbReference>
<dbReference type="InterPro" id="IPR020058">
    <property type="entry name" value="Glu/Gln-tRNA-synth_Ib_cat-dom"/>
</dbReference>
<dbReference type="InterPro" id="IPR020059">
    <property type="entry name" value="Glu/Gln-tRNA-synth_Ib_codon-bd"/>
</dbReference>
<dbReference type="InterPro" id="IPR020061">
    <property type="entry name" value="Glu_tRNA_lig_a-bdl"/>
</dbReference>
<dbReference type="InterPro" id="IPR020056">
    <property type="entry name" value="Rbsml_bL25/Gln-tRNA_synth_N"/>
</dbReference>
<dbReference type="InterPro" id="IPR011035">
    <property type="entry name" value="Ribosomal_bL25/Gln-tRNA_synth"/>
</dbReference>
<dbReference type="InterPro" id="IPR014729">
    <property type="entry name" value="Rossmann-like_a/b/a_fold"/>
</dbReference>
<dbReference type="InterPro" id="IPR049437">
    <property type="entry name" value="tRNA-synt_1c_C2"/>
</dbReference>
<dbReference type="NCBIfam" id="TIGR00440">
    <property type="entry name" value="glnS"/>
    <property type="match status" value="1"/>
</dbReference>
<dbReference type="NCBIfam" id="NF011291">
    <property type="entry name" value="PRK14703.1"/>
    <property type="match status" value="1"/>
</dbReference>
<dbReference type="PANTHER" id="PTHR43097:SF5">
    <property type="entry name" value="GLUTAMATE--TRNA LIGASE"/>
    <property type="match status" value="1"/>
</dbReference>
<dbReference type="PANTHER" id="PTHR43097">
    <property type="entry name" value="GLUTAMINE-TRNA LIGASE"/>
    <property type="match status" value="1"/>
</dbReference>
<dbReference type="Pfam" id="PF00749">
    <property type="entry name" value="tRNA-synt_1c"/>
    <property type="match status" value="1"/>
</dbReference>
<dbReference type="Pfam" id="PF03950">
    <property type="entry name" value="tRNA-synt_1c_C"/>
    <property type="match status" value="1"/>
</dbReference>
<dbReference type="Pfam" id="PF20974">
    <property type="entry name" value="tRNA-synt_1c_C2"/>
    <property type="match status" value="1"/>
</dbReference>
<dbReference type="PRINTS" id="PR00987">
    <property type="entry name" value="TRNASYNTHGLU"/>
</dbReference>
<dbReference type="SUPFAM" id="SSF52374">
    <property type="entry name" value="Nucleotidylyl transferase"/>
    <property type="match status" value="1"/>
</dbReference>
<dbReference type="SUPFAM" id="SSF50715">
    <property type="entry name" value="Ribosomal protein L25-like"/>
    <property type="match status" value="1"/>
</dbReference>
<dbReference type="PROSITE" id="PS00178">
    <property type="entry name" value="AA_TRNA_LIGASE_I"/>
    <property type="match status" value="1"/>
</dbReference>